<protein>
    <recommendedName>
        <fullName>Copper transporter 1</fullName>
        <shortName>AtCOPT1</shortName>
    </recommendedName>
</protein>
<organism>
    <name type="scientific">Arabidopsis thaliana</name>
    <name type="common">Mouse-ear cress</name>
    <dbReference type="NCBI Taxonomy" id="3702"/>
    <lineage>
        <taxon>Eukaryota</taxon>
        <taxon>Viridiplantae</taxon>
        <taxon>Streptophyta</taxon>
        <taxon>Embryophyta</taxon>
        <taxon>Tracheophyta</taxon>
        <taxon>Spermatophyta</taxon>
        <taxon>Magnoliopsida</taxon>
        <taxon>eudicotyledons</taxon>
        <taxon>Gunneridae</taxon>
        <taxon>Pentapetalae</taxon>
        <taxon>rosids</taxon>
        <taxon>malvids</taxon>
        <taxon>Brassicales</taxon>
        <taxon>Brassicaceae</taxon>
        <taxon>Camelineae</taxon>
        <taxon>Arabidopsis</taxon>
    </lineage>
</organism>
<feature type="chain" id="PRO_0000195045" description="Copper transporter 1">
    <location>
        <begin position="1"/>
        <end position="170"/>
    </location>
</feature>
<feature type="transmembrane region" description="Helical" evidence="1">
    <location>
        <begin position="65"/>
        <end position="85"/>
    </location>
</feature>
<feature type="transmembrane region" description="Helical" evidence="1">
    <location>
        <begin position="114"/>
        <end position="134"/>
    </location>
</feature>
<feature type="region of interest" description="Disordered" evidence="2">
    <location>
        <begin position="1"/>
        <end position="29"/>
    </location>
</feature>
<feature type="compositionally biased region" description="Low complexity" evidence="2">
    <location>
        <begin position="9"/>
        <end position="29"/>
    </location>
</feature>
<feature type="sequence conflict" description="In Ref. 1; CAA90018." evidence="6" ref="1">
    <original>RPS</original>
    <variation>PP</variation>
    <location>
        <begin position="11"/>
        <end position="13"/>
    </location>
</feature>
<evidence type="ECO:0000255" key="1"/>
<evidence type="ECO:0000256" key="2">
    <source>
        <dbReference type="SAM" id="MobiDB-lite"/>
    </source>
</evidence>
<evidence type="ECO:0000269" key="3">
    <source>
    </source>
</evidence>
<evidence type="ECO:0000269" key="4">
    <source>
    </source>
</evidence>
<evidence type="ECO:0000269" key="5">
    <source>
    </source>
</evidence>
<evidence type="ECO:0000305" key="6"/>
<accession>Q39065</accession>
<accession>Q547P9</accession>
<keyword id="KW-0186">Copper</keyword>
<keyword id="KW-0187">Copper transport</keyword>
<keyword id="KW-0406">Ion transport</keyword>
<keyword id="KW-0472">Membrane</keyword>
<keyword id="KW-1185">Reference proteome</keyword>
<keyword id="KW-0812">Transmembrane</keyword>
<keyword id="KW-1133">Transmembrane helix</keyword>
<keyword id="KW-0813">Transport</keyword>
<reference key="1">
    <citation type="journal article" date="1995" name="J. Biol. Chem.">
        <title>Molecular characterization of a putative Arabidopsis thaliana copper transporter and its yeast homologue.</title>
        <authorList>
            <person name="Kampfenkel K.K.K."/>
            <person name="Kushnir S."/>
            <person name="Babiychuk E."/>
            <person name="Inze D."/>
            <person name="Vanmontagu M."/>
        </authorList>
    </citation>
    <scope>NUCLEOTIDE SEQUENCE [MRNA]</scope>
    <scope>FUNCTION</scope>
    <source>
        <strain>cv. Columbia</strain>
        <tissue>Seedling</tissue>
    </source>
</reference>
<reference key="2">
    <citation type="journal article" date="2000" name="DNA Res.">
        <title>Structural analysis of Arabidopsis thaliana chromosome 5. X. Sequence features of the regions of 3,076,755 bp covered by sixty P1 and TAC clones.</title>
        <authorList>
            <person name="Sato S."/>
            <person name="Nakamura Y."/>
            <person name="Kaneko T."/>
            <person name="Katoh T."/>
            <person name="Asamizu E."/>
            <person name="Kotani H."/>
            <person name="Tabata S."/>
        </authorList>
    </citation>
    <scope>NUCLEOTIDE SEQUENCE [LARGE SCALE GENOMIC DNA]</scope>
    <source>
        <strain>cv. Columbia</strain>
    </source>
</reference>
<reference key="3">
    <citation type="journal article" date="2017" name="Plant J.">
        <title>Araport11: a complete reannotation of the Arabidopsis thaliana reference genome.</title>
        <authorList>
            <person name="Cheng C.Y."/>
            <person name="Krishnakumar V."/>
            <person name="Chan A.P."/>
            <person name="Thibaud-Nissen F."/>
            <person name="Schobel S."/>
            <person name="Town C.D."/>
        </authorList>
    </citation>
    <scope>GENOME REANNOTATION</scope>
    <source>
        <strain>cv. Columbia</strain>
    </source>
</reference>
<reference key="4">
    <citation type="journal article" date="2003" name="Science">
        <title>Empirical analysis of transcriptional activity in the Arabidopsis genome.</title>
        <authorList>
            <person name="Yamada K."/>
            <person name="Lim J."/>
            <person name="Dale J.M."/>
            <person name="Chen H."/>
            <person name="Shinn P."/>
            <person name="Palm C.J."/>
            <person name="Southwick A.M."/>
            <person name="Wu H.C."/>
            <person name="Kim C.J."/>
            <person name="Nguyen M."/>
            <person name="Pham P.K."/>
            <person name="Cheuk R.F."/>
            <person name="Karlin-Newmann G."/>
            <person name="Liu S.X."/>
            <person name="Lam B."/>
            <person name="Sakano H."/>
            <person name="Wu T."/>
            <person name="Yu G."/>
            <person name="Miranda M."/>
            <person name="Quach H.L."/>
            <person name="Tripp M."/>
            <person name="Chang C.H."/>
            <person name="Lee J.M."/>
            <person name="Toriumi M.J."/>
            <person name="Chan M.M."/>
            <person name="Tang C.C."/>
            <person name="Onodera C.S."/>
            <person name="Deng J.M."/>
            <person name="Akiyama K."/>
            <person name="Ansari Y."/>
            <person name="Arakawa T."/>
            <person name="Banh J."/>
            <person name="Banno F."/>
            <person name="Bowser L."/>
            <person name="Brooks S.Y."/>
            <person name="Carninci P."/>
            <person name="Chao Q."/>
            <person name="Choy N."/>
            <person name="Enju A."/>
            <person name="Goldsmith A.D."/>
            <person name="Gurjal M."/>
            <person name="Hansen N.F."/>
            <person name="Hayashizaki Y."/>
            <person name="Johnson-Hopson C."/>
            <person name="Hsuan V.W."/>
            <person name="Iida K."/>
            <person name="Karnes M."/>
            <person name="Khan S."/>
            <person name="Koesema E."/>
            <person name="Ishida J."/>
            <person name="Jiang P.X."/>
            <person name="Jones T."/>
            <person name="Kawai J."/>
            <person name="Kamiya A."/>
            <person name="Meyers C."/>
            <person name="Nakajima M."/>
            <person name="Narusaka M."/>
            <person name="Seki M."/>
            <person name="Sakurai T."/>
            <person name="Satou M."/>
            <person name="Tamse R."/>
            <person name="Vaysberg M."/>
            <person name="Wallender E.K."/>
            <person name="Wong C."/>
            <person name="Yamamura Y."/>
            <person name="Yuan S."/>
            <person name="Shinozaki K."/>
            <person name="Davis R.W."/>
            <person name="Theologis A."/>
            <person name="Ecker J.R."/>
        </authorList>
    </citation>
    <scope>NUCLEOTIDE SEQUENCE [LARGE SCALE MRNA]</scope>
    <source>
        <strain>cv. Columbia</strain>
    </source>
</reference>
<reference key="5">
    <citation type="submission" date="2006-07" db="EMBL/GenBank/DDBJ databases">
        <title>Large-scale analysis of RIKEN Arabidopsis full-length (RAFL) cDNAs.</title>
        <authorList>
            <person name="Totoki Y."/>
            <person name="Seki M."/>
            <person name="Ishida J."/>
            <person name="Nakajima M."/>
            <person name="Enju A."/>
            <person name="Kamiya A."/>
            <person name="Narusaka M."/>
            <person name="Shin-i T."/>
            <person name="Nakagawa M."/>
            <person name="Sakamoto N."/>
            <person name="Oishi K."/>
            <person name="Kohara Y."/>
            <person name="Kobayashi M."/>
            <person name="Toyoda A."/>
            <person name="Sakaki Y."/>
            <person name="Sakurai T."/>
            <person name="Iida K."/>
            <person name="Akiyama K."/>
            <person name="Satou M."/>
            <person name="Toyoda T."/>
            <person name="Konagaya A."/>
            <person name="Carninci P."/>
            <person name="Kawai J."/>
            <person name="Hayashizaki Y."/>
            <person name="Shinozaki K."/>
        </authorList>
    </citation>
    <scope>NUCLEOTIDE SEQUENCE [LARGE SCALE MRNA]</scope>
    <source>
        <strain>cv. Columbia</strain>
    </source>
</reference>
<reference key="6">
    <citation type="journal article" date="2003" name="Plant Mol. Biol.">
        <title>Identification of a copper transporter family in Arabidopsis thaliana.</title>
        <authorList>
            <person name="Sancenon V."/>
            <person name="Puig S."/>
            <person name="Mira H."/>
            <person name="Thiele D.J."/>
            <person name="Penarrubia L."/>
        </authorList>
    </citation>
    <scope>FUNCTION</scope>
    <scope>TISSUE SPECIFICITY</scope>
    <scope>INDUCTION</scope>
    <scope>GENE FAMILY</scope>
    <scope>NOMENCLATURE</scope>
</reference>
<reference key="7">
    <citation type="journal article" date="2004" name="J. Biol. Chem.">
        <title>The Arabidopsis copper transporter COPT1 functions in root elongation and pollen development.</title>
        <authorList>
            <person name="Sancenon V."/>
            <person name="Puig S."/>
            <person name="Mateu-Andres I."/>
            <person name="Dorcey E."/>
            <person name="Thiele D.J."/>
            <person name="Penarrubia L."/>
        </authorList>
    </citation>
    <scope>FUNCTION</scope>
    <scope>TISSUE SPECIFICITY</scope>
    <scope>DISRUPTION PHENOTYPE</scope>
</reference>
<comment type="function">
    <text evidence="3 4 5">Copper transporter involved in copper acquisition and transport in leaves. Required for copper homeostasis and normal plant growth and development.</text>
</comment>
<comment type="subcellular location">
    <subcellularLocation>
        <location evidence="6">Membrane</location>
        <topology evidence="6">Multi-pass membrane protein</topology>
    </subcellularLocation>
</comment>
<comment type="tissue specificity">
    <text evidence="3 4">Expressed in the root apex, lateral root primordia, embryo, trichomes, guard cells and pollen grains.</text>
</comment>
<comment type="induction">
    <text evidence="3">Down-regulated by treatment with high concentrations of copper.</text>
</comment>
<comment type="disruption phenotype">
    <text evidence="4">Increased root length and pollen development defects.</text>
</comment>
<comment type="miscellaneous">
    <text>The increased root length and pollen development defects phenotypes of the mutants are completely and specifically reversed by copper addition.</text>
</comment>
<comment type="similarity">
    <text evidence="6">Belongs to the copper transporter (Ctr) (TC 1.A.56) family. SLC31A subfamily.</text>
</comment>
<proteinExistence type="evidence at transcript level"/>
<sequence length="170" mass="18399">MDHDHMHGMPRPSSSSSSSPSSMMNNGSMNEGGGHHHMKMMMHMTFFWGKNTEVLFSGWPGTSSGMYALCLIFVFFLAVLTEWLAHSSLLRGSTGDSANRAAGLIQTAVYTLRIGLAYLVMLAVMSFNAGVFLVALAGHAVGFMLFGSQTFRNTSDDRKTNYVPPSGCAC</sequence>
<name>COPT1_ARATH</name>
<gene>
    <name type="primary">COPT1</name>
    <name type="ordered locus">At5g59030</name>
    <name type="ORF">K18B18.10</name>
    <name type="ORF">K18B18.2</name>
</gene>
<dbReference type="EMBL" id="Z49859">
    <property type="protein sequence ID" value="CAA90018.1"/>
    <property type="molecule type" value="mRNA"/>
</dbReference>
<dbReference type="EMBL" id="AB024027">
    <property type="protein sequence ID" value="BAB10779.1"/>
    <property type="molecule type" value="Genomic_DNA"/>
</dbReference>
<dbReference type="EMBL" id="CP002688">
    <property type="protein sequence ID" value="AED97132.1"/>
    <property type="molecule type" value="Genomic_DNA"/>
</dbReference>
<dbReference type="EMBL" id="AY091090">
    <property type="protein sequence ID" value="AAM13909.1"/>
    <property type="molecule type" value="mRNA"/>
</dbReference>
<dbReference type="EMBL" id="AY123038">
    <property type="protein sequence ID" value="AAM67571.1"/>
    <property type="molecule type" value="mRNA"/>
</dbReference>
<dbReference type="EMBL" id="AF466373">
    <property type="protein sequence ID" value="AAL74265.1"/>
    <property type="molecule type" value="mRNA"/>
</dbReference>
<dbReference type="EMBL" id="AK226835">
    <property type="protein sequence ID" value="BAE98928.1"/>
    <property type="molecule type" value="mRNA"/>
</dbReference>
<dbReference type="PIR" id="T48875">
    <property type="entry name" value="T48875"/>
</dbReference>
<dbReference type="RefSeq" id="NP_200711.1">
    <property type="nucleotide sequence ID" value="NM_125293.4"/>
</dbReference>
<dbReference type="SMR" id="Q39065"/>
<dbReference type="BioGRID" id="21264">
    <property type="interactions" value="1"/>
</dbReference>
<dbReference type="FunCoup" id="Q39065">
    <property type="interactions" value="1411"/>
</dbReference>
<dbReference type="IntAct" id="Q39065">
    <property type="interactions" value="1"/>
</dbReference>
<dbReference type="STRING" id="3702.Q39065"/>
<dbReference type="TCDB" id="1.A.56.1.1">
    <property type="family name" value="the copper transporter (ctr) family"/>
</dbReference>
<dbReference type="PaxDb" id="3702-AT5G59030.1"/>
<dbReference type="ProteomicsDB" id="241169"/>
<dbReference type="EnsemblPlants" id="AT5G59030.1">
    <property type="protein sequence ID" value="AT5G59030.1"/>
    <property type="gene ID" value="AT5G59030"/>
</dbReference>
<dbReference type="GeneID" id="836020"/>
<dbReference type="Gramene" id="AT5G59030.1">
    <property type="protein sequence ID" value="AT5G59030.1"/>
    <property type="gene ID" value="AT5G59030"/>
</dbReference>
<dbReference type="KEGG" id="ath:AT5G59030"/>
<dbReference type="Araport" id="AT5G59030"/>
<dbReference type="TAIR" id="AT5G59030">
    <property type="gene designation" value="COPT1"/>
</dbReference>
<dbReference type="eggNOG" id="KOG3386">
    <property type="taxonomic scope" value="Eukaryota"/>
</dbReference>
<dbReference type="HOGENOM" id="CLU_079690_1_2_1"/>
<dbReference type="InParanoid" id="Q39065"/>
<dbReference type="OMA" id="GTRTSMY"/>
<dbReference type="PhylomeDB" id="Q39065"/>
<dbReference type="PRO" id="PR:Q39065"/>
<dbReference type="Proteomes" id="UP000006548">
    <property type="component" value="Chromosome 5"/>
</dbReference>
<dbReference type="ExpressionAtlas" id="Q39065">
    <property type="expression patterns" value="baseline and differential"/>
</dbReference>
<dbReference type="GO" id="GO:0016020">
    <property type="term" value="C:membrane"/>
    <property type="evidence" value="ECO:0000250"/>
    <property type="project" value="TAIR"/>
</dbReference>
<dbReference type="GO" id="GO:0005375">
    <property type="term" value="F:copper ion transmembrane transporter activity"/>
    <property type="evidence" value="ECO:0000316"/>
    <property type="project" value="TAIR"/>
</dbReference>
<dbReference type="GO" id="GO:0006825">
    <property type="term" value="P:copper ion transport"/>
    <property type="evidence" value="ECO:0000316"/>
    <property type="project" value="TAIR"/>
</dbReference>
<dbReference type="GO" id="GO:0048235">
    <property type="term" value="P:pollen sperm cell differentiation"/>
    <property type="evidence" value="ECO:0000315"/>
    <property type="project" value="TAIR"/>
</dbReference>
<dbReference type="GO" id="GO:0048364">
    <property type="term" value="P:root development"/>
    <property type="evidence" value="ECO:0000315"/>
    <property type="project" value="TAIR"/>
</dbReference>
<dbReference type="InterPro" id="IPR007274">
    <property type="entry name" value="Cop_transporter"/>
</dbReference>
<dbReference type="PANTHER" id="PTHR12483:SF121">
    <property type="entry name" value="COPPER TRANSPORTER 1"/>
    <property type="match status" value="1"/>
</dbReference>
<dbReference type="PANTHER" id="PTHR12483">
    <property type="entry name" value="SOLUTE CARRIER FAMILY 31 COPPER TRANSPORTERS"/>
    <property type="match status" value="1"/>
</dbReference>
<dbReference type="Pfam" id="PF04145">
    <property type="entry name" value="Ctr"/>
    <property type="match status" value="2"/>
</dbReference>